<sequence length="682" mass="72251">MSRKQLALLEPTLVRQALLDAVKKLSPMVQWRNPVMFIVWVGSLLTTLLAIAMAGGALTGSATFTAAVSIWLWFTVLFANFAEAMAEGRSKAQANSLKGVKKTAFARKLRAPQHDAPVDHVPAEDLRKGDVVLVEAGDIIPCDGEVIEGGASVDESAITGESAPVIRESGGDFASVTGGTRILSDWLVIRCSVNPGETFLDRMIAMVEGAQRRKTPNEIALTILLIALTLVFLLATATIWPFSAWSGNAVSVTVLVALLVCLIPTTIGGLLSAIGVAGMSRMLGANVIATSGRAVEAAGDVDVLLLDKTGTITLGNRQASAFLPARGVEERTLADAAQLSSLADETPEGRSIVVLAKQRFNLRERDLQSLHATFVPFTAQTRMSGINIDQRMIRKGSVDAIRRHVEANGGHFPADVDKQVEEVARQGATPLVVAEGEKVLGIIALKDIVKGGIKERFAQLRKMGIKTVMITGDNRLTAAAIAAEAGVDDFLAEATPEAKLALIRQYQSEGRLVAMTGDGTNDAPALAQADVAVAMNSGTQAAKEAGNMVDLDSNPTKLIEVVHIGKQMLMTRGSLTTFSIANDVAKYFAIIPAAFAAVYPQLAMLNVMGLHSPSSAILSAVIFNALIIVFLIPLALKGVSYRPLSASAMLRRNLWIYGLGGLLVPFIGIKAIDLLLTLSGLV</sequence>
<accession>A6T6D8</accession>
<proteinExistence type="inferred from homology"/>
<evidence type="ECO:0000255" key="1">
    <source>
        <dbReference type="HAMAP-Rule" id="MF_00285"/>
    </source>
</evidence>
<dbReference type="EC" id="7.2.2.6" evidence="1"/>
<dbReference type="EMBL" id="CP000647">
    <property type="protein sequence ID" value="ABR76159.1"/>
    <property type="molecule type" value="Genomic_DNA"/>
</dbReference>
<dbReference type="RefSeq" id="WP_004147607.1">
    <property type="nucleotide sequence ID" value="NC_009648.1"/>
</dbReference>
<dbReference type="SMR" id="A6T6D8"/>
<dbReference type="STRING" id="272620.KPN_00716"/>
<dbReference type="PaxDb" id="272620-KPN_00716"/>
<dbReference type="EnsemblBacteria" id="ABR76159">
    <property type="protein sequence ID" value="ABR76159"/>
    <property type="gene ID" value="KPN_00716"/>
</dbReference>
<dbReference type="KEGG" id="kpn:KPN_00716"/>
<dbReference type="HOGENOM" id="CLU_025728_2_0_6"/>
<dbReference type="Proteomes" id="UP000000265">
    <property type="component" value="Chromosome"/>
</dbReference>
<dbReference type="GO" id="GO:0005886">
    <property type="term" value="C:plasma membrane"/>
    <property type="evidence" value="ECO:0007669"/>
    <property type="project" value="UniProtKB-SubCell"/>
</dbReference>
<dbReference type="GO" id="GO:0005524">
    <property type="term" value="F:ATP binding"/>
    <property type="evidence" value="ECO:0007669"/>
    <property type="project" value="UniProtKB-UniRule"/>
</dbReference>
<dbReference type="GO" id="GO:0016887">
    <property type="term" value="F:ATP hydrolysis activity"/>
    <property type="evidence" value="ECO:0007669"/>
    <property type="project" value="InterPro"/>
</dbReference>
<dbReference type="GO" id="GO:0000287">
    <property type="term" value="F:magnesium ion binding"/>
    <property type="evidence" value="ECO:0007669"/>
    <property type="project" value="UniProtKB-UniRule"/>
</dbReference>
<dbReference type="GO" id="GO:0008556">
    <property type="term" value="F:P-type potassium transmembrane transporter activity"/>
    <property type="evidence" value="ECO:0007669"/>
    <property type="project" value="UniProtKB-UniRule"/>
</dbReference>
<dbReference type="CDD" id="cd02078">
    <property type="entry name" value="P-type_ATPase_K"/>
    <property type="match status" value="1"/>
</dbReference>
<dbReference type="FunFam" id="2.70.150.10:FF:000010">
    <property type="entry name" value="Potassium-transporting ATPase ATP-binding subunit"/>
    <property type="match status" value="1"/>
</dbReference>
<dbReference type="FunFam" id="3.40.1110.10:FF:000007">
    <property type="entry name" value="Potassium-transporting ATPase ATP-binding subunit"/>
    <property type="match status" value="1"/>
</dbReference>
<dbReference type="Gene3D" id="3.40.1110.10">
    <property type="entry name" value="Calcium-transporting ATPase, cytoplasmic domain N"/>
    <property type="match status" value="1"/>
</dbReference>
<dbReference type="Gene3D" id="2.70.150.10">
    <property type="entry name" value="Calcium-transporting ATPase, cytoplasmic transduction domain A"/>
    <property type="match status" value="1"/>
</dbReference>
<dbReference type="Gene3D" id="3.40.50.1000">
    <property type="entry name" value="HAD superfamily/HAD-like"/>
    <property type="match status" value="1"/>
</dbReference>
<dbReference type="HAMAP" id="MF_00285">
    <property type="entry name" value="KdpB"/>
    <property type="match status" value="1"/>
</dbReference>
<dbReference type="InterPro" id="IPR023299">
    <property type="entry name" value="ATPase_P-typ_cyto_dom_N"/>
</dbReference>
<dbReference type="InterPro" id="IPR018303">
    <property type="entry name" value="ATPase_P-typ_P_site"/>
</dbReference>
<dbReference type="InterPro" id="IPR023298">
    <property type="entry name" value="ATPase_P-typ_TM_dom_sf"/>
</dbReference>
<dbReference type="InterPro" id="IPR008250">
    <property type="entry name" value="ATPase_P-typ_transduc_dom_A_sf"/>
</dbReference>
<dbReference type="InterPro" id="IPR036412">
    <property type="entry name" value="HAD-like_sf"/>
</dbReference>
<dbReference type="InterPro" id="IPR023214">
    <property type="entry name" value="HAD_sf"/>
</dbReference>
<dbReference type="InterPro" id="IPR006391">
    <property type="entry name" value="P-type_ATPase_bsu_IA"/>
</dbReference>
<dbReference type="InterPro" id="IPR001757">
    <property type="entry name" value="P_typ_ATPase"/>
</dbReference>
<dbReference type="InterPro" id="IPR044492">
    <property type="entry name" value="P_typ_ATPase_HD_dom"/>
</dbReference>
<dbReference type="NCBIfam" id="TIGR01494">
    <property type="entry name" value="ATPase_P-type"/>
    <property type="match status" value="2"/>
</dbReference>
<dbReference type="NCBIfam" id="TIGR01497">
    <property type="entry name" value="kdpB"/>
    <property type="match status" value="1"/>
</dbReference>
<dbReference type="PANTHER" id="PTHR43743">
    <property type="entry name" value="POTASSIUM-TRANSPORTING ATPASE ATP-BINDING SUBUNIT"/>
    <property type="match status" value="1"/>
</dbReference>
<dbReference type="PANTHER" id="PTHR43743:SF1">
    <property type="entry name" value="POTASSIUM-TRANSPORTING ATPASE ATP-BINDING SUBUNIT"/>
    <property type="match status" value="1"/>
</dbReference>
<dbReference type="Pfam" id="PF00122">
    <property type="entry name" value="E1-E2_ATPase"/>
    <property type="match status" value="1"/>
</dbReference>
<dbReference type="Pfam" id="PF00702">
    <property type="entry name" value="Hydrolase"/>
    <property type="match status" value="1"/>
</dbReference>
<dbReference type="PRINTS" id="PR00119">
    <property type="entry name" value="CATATPASE"/>
</dbReference>
<dbReference type="SFLD" id="SFLDS00003">
    <property type="entry name" value="Haloacid_Dehalogenase"/>
    <property type="match status" value="1"/>
</dbReference>
<dbReference type="SFLD" id="SFLDF00027">
    <property type="entry name" value="p-type_atpase"/>
    <property type="match status" value="1"/>
</dbReference>
<dbReference type="SUPFAM" id="SSF81653">
    <property type="entry name" value="Calcium ATPase, transduction domain A"/>
    <property type="match status" value="1"/>
</dbReference>
<dbReference type="SUPFAM" id="SSF81665">
    <property type="entry name" value="Calcium ATPase, transmembrane domain M"/>
    <property type="match status" value="1"/>
</dbReference>
<dbReference type="SUPFAM" id="SSF56784">
    <property type="entry name" value="HAD-like"/>
    <property type="match status" value="1"/>
</dbReference>
<dbReference type="SUPFAM" id="SSF81660">
    <property type="entry name" value="Metal cation-transporting ATPase, ATP-binding domain N"/>
    <property type="match status" value="1"/>
</dbReference>
<dbReference type="PROSITE" id="PS00154">
    <property type="entry name" value="ATPASE_E1_E2"/>
    <property type="match status" value="1"/>
</dbReference>
<name>KDPB_KLEP7</name>
<comment type="function">
    <text evidence="1">Part of the high-affinity ATP-driven potassium transport (or Kdp) system, which catalyzes the hydrolysis of ATP coupled with the electrogenic transport of potassium into the cytoplasm. This subunit is responsible for energy coupling to the transport system and for the release of the potassium ions to the cytoplasm.</text>
</comment>
<comment type="catalytic activity">
    <reaction evidence="1">
        <text>K(+)(out) + ATP + H2O = K(+)(in) + ADP + phosphate + H(+)</text>
        <dbReference type="Rhea" id="RHEA:16777"/>
        <dbReference type="ChEBI" id="CHEBI:15377"/>
        <dbReference type="ChEBI" id="CHEBI:15378"/>
        <dbReference type="ChEBI" id="CHEBI:29103"/>
        <dbReference type="ChEBI" id="CHEBI:30616"/>
        <dbReference type="ChEBI" id="CHEBI:43474"/>
        <dbReference type="ChEBI" id="CHEBI:456216"/>
        <dbReference type="EC" id="7.2.2.6"/>
    </reaction>
    <physiologicalReaction direction="left-to-right" evidence="1">
        <dbReference type="Rhea" id="RHEA:16778"/>
    </physiologicalReaction>
</comment>
<comment type="subunit">
    <text evidence="1">The system is composed of three essential subunits: KdpA, KdpB and KdpC.</text>
</comment>
<comment type="subcellular location">
    <subcellularLocation>
        <location evidence="1">Cell inner membrane</location>
        <topology evidence="1">Multi-pass membrane protein</topology>
    </subcellularLocation>
</comment>
<comment type="similarity">
    <text evidence="1">Belongs to the cation transport ATPase (P-type) (TC 3.A.3) family. Type IA subfamily.</text>
</comment>
<organism>
    <name type="scientific">Klebsiella pneumoniae subsp. pneumoniae (strain ATCC 700721 / MGH 78578)</name>
    <dbReference type="NCBI Taxonomy" id="272620"/>
    <lineage>
        <taxon>Bacteria</taxon>
        <taxon>Pseudomonadati</taxon>
        <taxon>Pseudomonadota</taxon>
        <taxon>Gammaproteobacteria</taxon>
        <taxon>Enterobacterales</taxon>
        <taxon>Enterobacteriaceae</taxon>
        <taxon>Klebsiella/Raoultella group</taxon>
        <taxon>Klebsiella</taxon>
        <taxon>Klebsiella pneumoniae complex</taxon>
    </lineage>
</organism>
<protein>
    <recommendedName>
        <fullName evidence="1">Potassium-transporting ATPase ATP-binding subunit</fullName>
        <ecNumber evidence="1">7.2.2.6</ecNumber>
    </recommendedName>
    <alternativeName>
        <fullName evidence="1">ATP phosphohydrolase [potassium-transporting] B chain</fullName>
    </alternativeName>
    <alternativeName>
        <fullName evidence="1">Potassium-binding and translocating subunit B</fullName>
    </alternativeName>
    <alternativeName>
        <fullName evidence="1">Potassium-translocating ATPase B chain</fullName>
    </alternativeName>
</protein>
<gene>
    <name evidence="1" type="primary">kdpB</name>
    <name type="ordered locus">KPN78578_06980</name>
    <name type="ORF">KPN_00716</name>
</gene>
<keyword id="KW-0067">ATP-binding</keyword>
<keyword id="KW-0997">Cell inner membrane</keyword>
<keyword id="KW-1003">Cell membrane</keyword>
<keyword id="KW-0406">Ion transport</keyword>
<keyword id="KW-0460">Magnesium</keyword>
<keyword id="KW-0472">Membrane</keyword>
<keyword id="KW-0479">Metal-binding</keyword>
<keyword id="KW-0547">Nucleotide-binding</keyword>
<keyword id="KW-0597">Phosphoprotein</keyword>
<keyword id="KW-0630">Potassium</keyword>
<keyword id="KW-0633">Potassium transport</keyword>
<keyword id="KW-1278">Translocase</keyword>
<keyword id="KW-0812">Transmembrane</keyword>
<keyword id="KW-1133">Transmembrane helix</keyword>
<keyword id="KW-0813">Transport</keyword>
<reference key="1">
    <citation type="submission" date="2006-09" db="EMBL/GenBank/DDBJ databases">
        <authorList>
            <consortium name="The Klebsiella pneumonia Genome Sequencing Project"/>
            <person name="McClelland M."/>
            <person name="Sanderson E.K."/>
            <person name="Spieth J."/>
            <person name="Clifton W.S."/>
            <person name="Latreille P."/>
            <person name="Sabo A."/>
            <person name="Pepin K."/>
            <person name="Bhonagiri V."/>
            <person name="Porwollik S."/>
            <person name="Ali J."/>
            <person name="Wilson R.K."/>
        </authorList>
    </citation>
    <scope>NUCLEOTIDE SEQUENCE [LARGE SCALE GENOMIC DNA]</scope>
    <source>
        <strain>ATCC 700721 / MGH 78578</strain>
    </source>
</reference>
<feature type="chain" id="PRO_1000022441" description="Potassium-transporting ATPase ATP-binding subunit">
    <location>
        <begin position="1"/>
        <end position="682"/>
    </location>
</feature>
<feature type="transmembrane region" description="Helical" evidence="1">
    <location>
        <begin position="35"/>
        <end position="55"/>
    </location>
</feature>
<feature type="transmembrane region" description="Helical" evidence="1">
    <location>
        <begin position="62"/>
        <end position="82"/>
    </location>
</feature>
<feature type="transmembrane region" description="Helical" evidence="1">
    <location>
        <begin position="219"/>
        <end position="239"/>
    </location>
</feature>
<feature type="transmembrane region" description="Helical" evidence="1">
    <location>
        <begin position="254"/>
        <end position="274"/>
    </location>
</feature>
<feature type="transmembrane region" description="Helical" evidence="1">
    <location>
        <begin position="588"/>
        <end position="608"/>
    </location>
</feature>
<feature type="transmembrane region" description="Helical" evidence="1">
    <location>
        <begin position="616"/>
        <end position="636"/>
    </location>
</feature>
<feature type="transmembrane region" description="Helical" evidence="1">
    <location>
        <begin position="656"/>
        <end position="676"/>
    </location>
</feature>
<feature type="active site" description="4-aspartylphosphate intermediate" evidence="1">
    <location>
        <position position="307"/>
    </location>
</feature>
<feature type="binding site" evidence="1">
    <location>
        <position position="344"/>
    </location>
    <ligand>
        <name>ATP</name>
        <dbReference type="ChEBI" id="CHEBI:30616"/>
    </ligand>
</feature>
<feature type="binding site" evidence="1">
    <location>
        <position position="348"/>
    </location>
    <ligand>
        <name>ATP</name>
        <dbReference type="ChEBI" id="CHEBI:30616"/>
    </ligand>
</feature>
<feature type="binding site" evidence="1">
    <location>
        <begin position="377"/>
        <end position="384"/>
    </location>
    <ligand>
        <name>ATP</name>
        <dbReference type="ChEBI" id="CHEBI:30616"/>
    </ligand>
</feature>
<feature type="binding site" evidence="1">
    <location>
        <position position="395"/>
    </location>
    <ligand>
        <name>ATP</name>
        <dbReference type="ChEBI" id="CHEBI:30616"/>
    </ligand>
</feature>
<feature type="binding site" evidence="1">
    <location>
        <position position="518"/>
    </location>
    <ligand>
        <name>Mg(2+)</name>
        <dbReference type="ChEBI" id="CHEBI:18420"/>
    </ligand>
</feature>
<feature type="binding site" evidence="1">
    <location>
        <position position="522"/>
    </location>
    <ligand>
        <name>Mg(2+)</name>
        <dbReference type="ChEBI" id="CHEBI:18420"/>
    </ligand>
</feature>